<name>RS6_GEOKA</name>
<proteinExistence type="inferred from homology"/>
<sequence>MRKYEIMYIIRPNMDDEARQALVERFNNVLKENGAEITNVTDWGKRRLAYEIQKYRDGYYMIVNVVSEPKAVQEFDRLARISEDIIRHIVVKEEE</sequence>
<keyword id="KW-1185">Reference proteome</keyword>
<keyword id="KW-0687">Ribonucleoprotein</keyword>
<keyword id="KW-0689">Ribosomal protein</keyword>
<keyword id="KW-0694">RNA-binding</keyword>
<keyword id="KW-0699">rRNA-binding</keyword>
<gene>
    <name evidence="1" type="primary">rpsF</name>
    <name type="ordered locus">GK3482</name>
</gene>
<feature type="chain" id="PRO_0000176770" description="Small ribosomal subunit protein bS6">
    <location>
        <begin position="1"/>
        <end position="95"/>
    </location>
</feature>
<comment type="function">
    <text evidence="1">Binds together with bS18 to 16S ribosomal RNA.</text>
</comment>
<comment type="similarity">
    <text evidence="1">Belongs to the bacterial ribosomal protein bS6 family.</text>
</comment>
<protein>
    <recommendedName>
        <fullName evidence="1">Small ribosomal subunit protein bS6</fullName>
    </recommendedName>
    <alternativeName>
        <fullName evidence="2">30S ribosomal protein S6</fullName>
    </alternativeName>
</protein>
<evidence type="ECO:0000255" key="1">
    <source>
        <dbReference type="HAMAP-Rule" id="MF_00360"/>
    </source>
</evidence>
<evidence type="ECO:0000305" key="2"/>
<reference key="1">
    <citation type="journal article" date="2004" name="Nucleic Acids Res.">
        <title>Thermoadaptation trait revealed by the genome sequence of thermophilic Geobacillus kaustophilus.</title>
        <authorList>
            <person name="Takami H."/>
            <person name="Takaki Y."/>
            <person name="Chee G.-J."/>
            <person name="Nishi S."/>
            <person name="Shimamura S."/>
            <person name="Suzuki H."/>
            <person name="Matsui S."/>
            <person name="Uchiyama I."/>
        </authorList>
    </citation>
    <scope>NUCLEOTIDE SEQUENCE [LARGE SCALE GENOMIC DNA]</scope>
    <source>
        <strain>HTA426</strain>
    </source>
</reference>
<dbReference type="EMBL" id="BA000043">
    <property type="protein sequence ID" value="BAD77767.1"/>
    <property type="molecule type" value="Genomic_DNA"/>
</dbReference>
<dbReference type="RefSeq" id="WP_011232945.1">
    <property type="nucleotide sequence ID" value="NC_006510.1"/>
</dbReference>
<dbReference type="SMR" id="Q5KU69"/>
<dbReference type="STRING" id="235909.GK3482"/>
<dbReference type="GeneID" id="32065359"/>
<dbReference type="KEGG" id="gka:GK3482"/>
<dbReference type="eggNOG" id="COG0360">
    <property type="taxonomic scope" value="Bacteria"/>
</dbReference>
<dbReference type="HOGENOM" id="CLU_113441_5_3_9"/>
<dbReference type="Proteomes" id="UP000001172">
    <property type="component" value="Chromosome"/>
</dbReference>
<dbReference type="GO" id="GO:0005737">
    <property type="term" value="C:cytoplasm"/>
    <property type="evidence" value="ECO:0007669"/>
    <property type="project" value="UniProtKB-ARBA"/>
</dbReference>
<dbReference type="GO" id="GO:1990904">
    <property type="term" value="C:ribonucleoprotein complex"/>
    <property type="evidence" value="ECO:0007669"/>
    <property type="project" value="UniProtKB-KW"/>
</dbReference>
<dbReference type="GO" id="GO:0005840">
    <property type="term" value="C:ribosome"/>
    <property type="evidence" value="ECO:0007669"/>
    <property type="project" value="UniProtKB-KW"/>
</dbReference>
<dbReference type="GO" id="GO:0070181">
    <property type="term" value="F:small ribosomal subunit rRNA binding"/>
    <property type="evidence" value="ECO:0007669"/>
    <property type="project" value="TreeGrafter"/>
</dbReference>
<dbReference type="GO" id="GO:0003735">
    <property type="term" value="F:structural constituent of ribosome"/>
    <property type="evidence" value="ECO:0007669"/>
    <property type="project" value="InterPro"/>
</dbReference>
<dbReference type="GO" id="GO:0006412">
    <property type="term" value="P:translation"/>
    <property type="evidence" value="ECO:0007669"/>
    <property type="project" value="UniProtKB-UniRule"/>
</dbReference>
<dbReference type="CDD" id="cd00473">
    <property type="entry name" value="bS6"/>
    <property type="match status" value="1"/>
</dbReference>
<dbReference type="FunFam" id="3.30.70.60:FF:000002">
    <property type="entry name" value="30S ribosomal protein S6"/>
    <property type="match status" value="1"/>
</dbReference>
<dbReference type="Gene3D" id="3.30.70.60">
    <property type="match status" value="1"/>
</dbReference>
<dbReference type="HAMAP" id="MF_00360">
    <property type="entry name" value="Ribosomal_bS6"/>
    <property type="match status" value="1"/>
</dbReference>
<dbReference type="InterPro" id="IPR000529">
    <property type="entry name" value="Ribosomal_bS6"/>
</dbReference>
<dbReference type="InterPro" id="IPR035980">
    <property type="entry name" value="Ribosomal_bS6_sf"/>
</dbReference>
<dbReference type="InterPro" id="IPR020814">
    <property type="entry name" value="Ribosomal_S6_plastid/chlpt"/>
</dbReference>
<dbReference type="InterPro" id="IPR014717">
    <property type="entry name" value="Transl_elong_EF1B/ribsomal_bS6"/>
</dbReference>
<dbReference type="NCBIfam" id="TIGR00166">
    <property type="entry name" value="S6"/>
    <property type="match status" value="1"/>
</dbReference>
<dbReference type="PANTHER" id="PTHR21011">
    <property type="entry name" value="MITOCHONDRIAL 28S RIBOSOMAL PROTEIN S6"/>
    <property type="match status" value="1"/>
</dbReference>
<dbReference type="PANTHER" id="PTHR21011:SF1">
    <property type="entry name" value="SMALL RIBOSOMAL SUBUNIT PROTEIN BS6M"/>
    <property type="match status" value="1"/>
</dbReference>
<dbReference type="Pfam" id="PF01250">
    <property type="entry name" value="Ribosomal_S6"/>
    <property type="match status" value="1"/>
</dbReference>
<dbReference type="SUPFAM" id="SSF54995">
    <property type="entry name" value="Ribosomal protein S6"/>
    <property type="match status" value="1"/>
</dbReference>
<accession>Q5KU69</accession>
<organism>
    <name type="scientific">Geobacillus kaustophilus (strain HTA426)</name>
    <dbReference type="NCBI Taxonomy" id="235909"/>
    <lineage>
        <taxon>Bacteria</taxon>
        <taxon>Bacillati</taxon>
        <taxon>Bacillota</taxon>
        <taxon>Bacilli</taxon>
        <taxon>Bacillales</taxon>
        <taxon>Anoxybacillaceae</taxon>
        <taxon>Geobacillus</taxon>
        <taxon>Geobacillus thermoleovorans group</taxon>
    </lineage>
</organism>